<gene>
    <name evidence="1" type="primary">rpsG</name>
    <name type="ordered locus">WIGBR0280</name>
</gene>
<comment type="function">
    <text evidence="1">One of the primary rRNA binding proteins, it binds directly to 16S rRNA where it nucleates assembly of the head domain of the 30S subunit. Is located at the subunit interface close to the decoding center, probably blocks exit of the E-site tRNA.</text>
</comment>
<comment type="subunit">
    <text evidence="1">Part of the 30S ribosomal subunit. Contacts proteins S9 and S11.</text>
</comment>
<comment type="similarity">
    <text evidence="1">Belongs to the universal ribosomal protein uS7 family.</text>
</comment>
<proteinExistence type="inferred from homology"/>
<name>RS7_WIGBR</name>
<evidence type="ECO:0000255" key="1">
    <source>
        <dbReference type="HAMAP-Rule" id="MF_00480"/>
    </source>
</evidence>
<evidence type="ECO:0000305" key="2"/>
<sequence>MPRRKMVNQRAILPDPKWNSEILSKFINILMVNGKKSISEKIIYTALNNLKKKLNKDHLTIFDLALEKVRPIVEVKSRRVGGSTYQVPIEVRSSRRNALAMRWIIEAARKRKDKSMSLRLAKEIEDALENKGTAVKKREEVHRMAEANKAFAHYRW</sequence>
<organism>
    <name type="scientific">Wigglesworthia glossinidia brevipalpis</name>
    <dbReference type="NCBI Taxonomy" id="36870"/>
    <lineage>
        <taxon>Bacteria</taxon>
        <taxon>Pseudomonadati</taxon>
        <taxon>Pseudomonadota</taxon>
        <taxon>Gammaproteobacteria</taxon>
        <taxon>Enterobacterales</taxon>
        <taxon>Erwiniaceae</taxon>
        <taxon>Wigglesworthia</taxon>
    </lineage>
</organism>
<keyword id="KW-1185">Reference proteome</keyword>
<keyword id="KW-0687">Ribonucleoprotein</keyword>
<keyword id="KW-0689">Ribosomal protein</keyword>
<keyword id="KW-0694">RNA-binding</keyword>
<keyword id="KW-0699">rRNA-binding</keyword>
<keyword id="KW-0820">tRNA-binding</keyword>
<accession>Q8D3H3</accession>
<reference key="1">
    <citation type="journal article" date="2002" name="Nat. Genet.">
        <title>Genome sequence of the endocellular obligate symbiont of tsetse flies, Wigglesworthia glossinidia.</title>
        <authorList>
            <person name="Akman L."/>
            <person name="Yamashita A."/>
            <person name="Watanabe H."/>
            <person name="Oshima K."/>
            <person name="Shiba T."/>
            <person name="Hattori M."/>
            <person name="Aksoy S."/>
        </authorList>
    </citation>
    <scope>NUCLEOTIDE SEQUENCE [LARGE SCALE GENOMIC DNA]</scope>
</reference>
<feature type="chain" id="PRO_0000124381" description="Small ribosomal subunit protein uS7">
    <location>
        <begin position="1"/>
        <end position="156"/>
    </location>
</feature>
<dbReference type="EMBL" id="BA000021">
    <property type="protein sequence ID" value="BAC24174.1"/>
    <property type="molecule type" value="Genomic_DNA"/>
</dbReference>
<dbReference type="SMR" id="Q8D3H3"/>
<dbReference type="STRING" id="36870.gene:10368506"/>
<dbReference type="KEGG" id="wbr:rpsG"/>
<dbReference type="eggNOG" id="COG0049">
    <property type="taxonomic scope" value="Bacteria"/>
</dbReference>
<dbReference type="HOGENOM" id="CLU_072226_1_1_6"/>
<dbReference type="OrthoDB" id="9807653at2"/>
<dbReference type="Proteomes" id="UP000000562">
    <property type="component" value="Chromosome"/>
</dbReference>
<dbReference type="GO" id="GO:0015935">
    <property type="term" value="C:small ribosomal subunit"/>
    <property type="evidence" value="ECO:0007669"/>
    <property type="project" value="InterPro"/>
</dbReference>
<dbReference type="GO" id="GO:0019843">
    <property type="term" value="F:rRNA binding"/>
    <property type="evidence" value="ECO:0007669"/>
    <property type="project" value="UniProtKB-UniRule"/>
</dbReference>
<dbReference type="GO" id="GO:0003735">
    <property type="term" value="F:structural constituent of ribosome"/>
    <property type="evidence" value="ECO:0007669"/>
    <property type="project" value="InterPro"/>
</dbReference>
<dbReference type="GO" id="GO:0000049">
    <property type="term" value="F:tRNA binding"/>
    <property type="evidence" value="ECO:0007669"/>
    <property type="project" value="UniProtKB-UniRule"/>
</dbReference>
<dbReference type="GO" id="GO:0006412">
    <property type="term" value="P:translation"/>
    <property type="evidence" value="ECO:0007669"/>
    <property type="project" value="UniProtKB-UniRule"/>
</dbReference>
<dbReference type="CDD" id="cd14869">
    <property type="entry name" value="uS7_Bacteria"/>
    <property type="match status" value="1"/>
</dbReference>
<dbReference type="FunFam" id="1.10.455.10:FF:000001">
    <property type="entry name" value="30S ribosomal protein S7"/>
    <property type="match status" value="1"/>
</dbReference>
<dbReference type="Gene3D" id="1.10.455.10">
    <property type="entry name" value="Ribosomal protein S7 domain"/>
    <property type="match status" value="1"/>
</dbReference>
<dbReference type="HAMAP" id="MF_00480_B">
    <property type="entry name" value="Ribosomal_uS7_B"/>
    <property type="match status" value="1"/>
</dbReference>
<dbReference type="InterPro" id="IPR000235">
    <property type="entry name" value="Ribosomal_uS7"/>
</dbReference>
<dbReference type="InterPro" id="IPR005717">
    <property type="entry name" value="Ribosomal_uS7_bac/org-type"/>
</dbReference>
<dbReference type="InterPro" id="IPR020606">
    <property type="entry name" value="Ribosomal_uS7_CS"/>
</dbReference>
<dbReference type="InterPro" id="IPR023798">
    <property type="entry name" value="Ribosomal_uS7_dom"/>
</dbReference>
<dbReference type="InterPro" id="IPR036823">
    <property type="entry name" value="Ribosomal_uS7_dom_sf"/>
</dbReference>
<dbReference type="NCBIfam" id="TIGR01029">
    <property type="entry name" value="rpsG_bact"/>
    <property type="match status" value="1"/>
</dbReference>
<dbReference type="PANTHER" id="PTHR11205">
    <property type="entry name" value="RIBOSOMAL PROTEIN S7"/>
    <property type="match status" value="1"/>
</dbReference>
<dbReference type="Pfam" id="PF00177">
    <property type="entry name" value="Ribosomal_S7"/>
    <property type="match status" value="1"/>
</dbReference>
<dbReference type="PIRSF" id="PIRSF002122">
    <property type="entry name" value="RPS7p_RPS7a_RPS5e_RPS7o"/>
    <property type="match status" value="1"/>
</dbReference>
<dbReference type="SUPFAM" id="SSF47973">
    <property type="entry name" value="Ribosomal protein S7"/>
    <property type="match status" value="1"/>
</dbReference>
<dbReference type="PROSITE" id="PS00052">
    <property type="entry name" value="RIBOSOMAL_S7"/>
    <property type="match status" value="1"/>
</dbReference>
<protein>
    <recommendedName>
        <fullName evidence="1">Small ribosomal subunit protein uS7</fullName>
    </recommendedName>
    <alternativeName>
        <fullName evidence="2">30S ribosomal protein S7</fullName>
    </alternativeName>
</protein>